<keyword id="KW-0002">3D-structure</keyword>
<keyword id="KW-0007">Acetylation</keyword>
<keyword id="KW-0227">DNA damage</keyword>
<keyword id="KW-0234">DNA repair</keyword>
<keyword id="KW-0507">mRNA processing</keyword>
<keyword id="KW-0508">mRNA splicing</keyword>
<keyword id="KW-0539">Nucleus</keyword>
<keyword id="KW-0597">Phosphoprotein</keyword>
<keyword id="KW-1267">Proteomics identification</keyword>
<keyword id="KW-1185">Reference proteome</keyword>
<keyword id="KW-0677">Repeat</keyword>
<keyword id="KW-0747">Spliceosome</keyword>
<keyword id="KW-0804">Transcription</keyword>
<feature type="chain" id="PRO_0000106414" description="Pre-mRNA-splicing factor SYF1">
    <location>
        <begin position="1"/>
        <end position="855"/>
    </location>
</feature>
<feature type="repeat" description="HAT 1" evidence="10">
    <location>
        <begin position="15"/>
        <end position="47"/>
    </location>
</feature>
<feature type="repeat" description="HAT 2" evidence="10">
    <location>
        <begin position="48"/>
        <end position="80"/>
    </location>
</feature>
<feature type="repeat" description="HAT 3" evidence="10">
    <location>
        <begin position="90"/>
        <end position="122"/>
    </location>
</feature>
<feature type="repeat" description="HAT 4" evidence="10">
    <location>
        <begin position="124"/>
        <end position="158"/>
    </location>
</feature>
<feature type="repeat" description="HAT 5" evidence="10">
    <location>
        <begin position="160"/>
        <end position="192"/>
    </location>
</feature>
<feature type="repeat" description="HAT 6">
    <location>
        <begin position="198"/>
        <end position="230"/>
    </location>
</feature>
<feature type="repeat" description="HAT 7">
    <location>
        <begin position="235"/>
        <end position="268"/>
    </location>
</feature>
<feature type="repeat" description="HAT 8">
    <location>
        <begin position="270"/>
        <end position="305"/>
    </location>
</feature>
<feature type="repeat" description="HAT 9">
    <location>
        <begin position="369"/>
        <end position="407"/>
    </location>
</feature>
<feature type="repeat" description="HAT 10">
    <location>
        <begin position="498"/>
        <end position="530"/>
    </location>
</feature>
<feature type="repeat" description="HAT 11">
    <location>
        <begin position="532"/>
        <end position="566"/>
    </location>
</feature>
<feature type="repeat" description="HAT 12">
    <location>
        <begin position="571"/>
        <end position="605"/>
    </location>
</feature>
<feature type="repeat" description="HAT 13">
    <location>
        <begin position="643"/>
        <end position="677"/>
    </location>
</feature>
<feature type="repeat" description="HAT 14">
    <location>
        <begin position="679"/>
        <end position="713"/>
    </location>
</feature>
<feature type="region of interest" description="Disordered" evidence="2">
    <location>
        <begin position="810"/>
        <end position="855"/>
    </location>
</feature>
<feature type="compositionally biased region" description="Acidic residues" evidence="2">
    <location>
        <begin position="820"/>
        <end position="834"/>
    </location>
</feature>
<feature type="modified residue" description="N6-acetyllysine" evidence="16">
    <location>
        <position position="420"/>
    </location>
</feature>
<feature type="modified residue" description="Phosphoserine" evidence="15 17">
    <location>
        <position position="851"/>
    </location>
</feature>
<feature type="sequence variant" id="VAR_016248" description="In dbSNP:rs4134822." evidence="9">
    <original>V</original>
    <variation>I</variation>
    <location>
        <position position="126"/>
    </location>
</feature>
<feature type="sequence variant" id="VAR_016249" description="In dbSNP:rs4134850." evidence="9">
    <original>R</original>
    <variation>Q</variation>
    <location>
        <position position="454"/>
    </location>
</feature>
<feature type="sequence variant" id="VAR_016250" description="In dbSNP:rs4134865." evidence="9">
    <original>A</original>
    <variation>T</variation>
    <location>
        <position position="702"/>
    </location>
</feature>
<feature type="sequence conflict" description="In Ref. 2; AAF86951." evidence="10" ref="2">
    <original>Y</original>
    <variation>T</variation>
    <location>
        <position position="68"/>
    </location>
</feature>
<feature type="sequence conflict" description="In Ref. 1; BAB15807." evidence="10" ref="1">
    <original>L</original>
    <variation>M</variation>
    <location>
        <position position="140"/>
    </location>
</feature>
<feature type="sequence conflict" description="In Ref. 5; AAH08778." evidence="10" ref="5">
    <original>E</original>
    <variation>K</variation>
    <location>
        <position position="447"/>
    </location>
</feature>
<feature type="sequence conflict" description="In Ref. 2; AAF86951." evidence="10" ref="2">
    <original>A</original>
    <variation>V</variation>
    <location>
        <position position="467"/>
    </location>
</feature>
<feature type="sequence conflict" description="In Ref. 2; AAF86951." evidence="10" ref="2">
    <original>E</original>
    <variation>K</variation>
    <location>
        <position position="680"/>
    </location>
</feature>
<feature type="sequence conflict" description="In Ref. 2; AAF86951." evidence="10" ref="2">
    <original>SAT</original>
    <variation>IP</variation>
    <location>
        <begin position="751"/>
        <end position="753"/>
    </location>
</feature>
<feature type="helix" evidence="18">
    <location>
        <begin position="160"/>
        <end position="165"/>
    </location>
</feature>
<feature type="helix" evidence="18">
    <location>
        <begin position="175"/>
        <end position="182"/>
    </location>
</feature>
<feature type="helix" evidence="18">
    <location>
        <begin position="187"/>
        <end position="200"/>
    </location>
</feature>
<feature type="helix" evidence="18">
    <location>
        <begin position="206"/>
        <end position="217"/>
    </location>
</feature>
<feature type="helix" evidence="18">
    <location>
        <begin position="224"/>
        <end position="233"/>
    </location>
</feature>
<feature type="helix" evidence="18">
    <location>
        <begin position="235"/>
        <end position="249"/>
    </location>
</feature>
<feature type="helix" evidence="18">
    <location>
        <begin position="255"/>
        <end position="268"/>
    </location>
</feature>
<feature type="helix" evidence="18">
    <location>
        <begin position="273"/>
        <end position="283"/>
    </location>
</feature>
<feature type="helix" evidence="18">
    <location>
        <begin position="286"/>
        <end position="298"/>
    </location>
</feature>
<feature type="helix" evidence="18">
    <location>
        <begin position="304"/>
        <end position="314"/>
    </location>
</feature>
<feature type="helix" evidence="18">
    <location>
        <begin position="322"/>
        <end position="333"/>
    </location>
</feature>
<feature type="helix" evidence="18">
    <location>
        <begin position="340"/>
        <end position="350"/>
    </location>
</feature>
<feature type="helix" evidence="18">
    <location>
        <begin position="354"/>
        <end position="365"/>
    </location>
</feature>
<feature type="helix" evidence="18">
    <location>
        <begin position="370"/>
        <end position="382"/>
    </location>
</feature>
<feature type="helix" evidence="18">
    <location>
        <begin position="388"/>
        <end position="397"/>
    </location>
</feature>
<feature type="helix" evidence="18">
    <location>
        <begin position="405"/>
        <end position="417"/>
    </location>
</feature>
<feature type="helix" evidence="18">
    <location>
        <begin position="424"/>
        <end position="438"/>
    </location>
</feature>
<feature type="helix" evidence="18">
    <location>
        <begin position="446"/>
        <end position="455"/>
    </location>
</feature>
<feature type="turn" evidence="18">
    <location>
        <begin position="456"/>
        <end position="458"/>
    </location>
</feature>
<feature type="helix" evidence="18">
    <location>
        <begin position="465"/>
        <end position="476"/>
    </location>
</feature>
<feature type="turn" evidence="18">
    <location>
        <begin position="483"/>
        <end position="486"/>
    </location>
</feature>
<feature type="helix" evidence="18">
    <location>
        <begin position="487"/>
        <end position="498"/>
    </location>
</feature>
<feature type="helix" evidence="18">
    <location>
        <begin position="508"/>
        <end position="523"/>
    </location>
</feature>
<feature type="helix" evidence="18">
    <location>
        <begin position="528"/>
        <end position="541"/>
    </location>
</feature>
<feature type="helix" evidence="18">
    <location>
        <begin position="545"/>
        <end position="547"/>
    </location>
</feature>
<feature type="helix" evidence="18">
    <location>
        <begin position="549"/>
        <end position="557"/>
    </location>
</feature>
<feature type="helix" evidence="18">
    <location>
        <begin position="570"/>
        <end position="579"/>
    </location>
</feature>
<feature type="helix" evidence="18">
    <location>
        <begin position="587"/>
        <end position="597"/>
    </location>
</feature>
<feature type="helix" evidence="18">
    <location>
        <begin position="602"/>
        <end position="635"/>
    </location>
</feature>
<feature type="helix" evidence="18">
    <location>
        <begin position="641"/>
        <end position="652"/>
    </location>
</feature>
<feature type="helix" evidence="18">
    <location>
        <begin position="664"/>
        <end position="675"/>
    </location>
</feature>
<feature type="helix" evidence="18">
    <location>
        <begin position="680"/>
        <end position="688"/>
    </location>
</feature>
<feature type="helix" evidence="18">
    <location>
        <begin position="707"/>
        <end position="719"/>
    </location>
</feature>
<feature type="helix" evidence="18">
    <location>
        <begin position="723"/>
        <end position="733"/>
    </location>
</feature>
<feature type="helix" evidence="18">
    <location>
        <begin position="741"/>
        <end position="755"/>
    </location>
</feature>
<feature type="helix" evidence="18">
    <location>
        <begin position="761"/>
        <end position="772"/>
    </location>
</feature>
<feature type="helix" evidence="18">
    <location>
        <begin position="780"/>
        <end position="791"/>
    </location>
</feature>
<feature type="strand" evidence="18">
    <location>
        <begin position="793"/>
        <end position="798"/>
    </location>
</feature>
<feature type="helix" evidence="18">
    <location>
        <begin position="799"/>
        <end position="817"/>
    </location>
</feature>
<sequence>MVVMARLSRPERPDLVFEEEDLPYEEEIMRNQFSVKCWLRYIEFKQGAPKPRLNQLYERALKLLPCSYKLWYRYLKARRAQVKHRCVTDPAYEDVNNCHERAFVFMHKMPRLWLDYCQFLMDQGRVTHTRRTFDRALRALPITQHSRIWPLYLRFLRSHPLPETAVRGYRRFLKLSPESAEEYIEYLKSSDRLDEAAQRLATVVNDERFVSKAGKSNYQLWHELCDLISQNPDKVQSLNVDAIIRGGLTRFTDQLGKLWCSLADYYIRSGHFEKARDVYEEAIRTVMTVRDFTQVFDSYAQFEESMIAAKMETASELGREEEDDVDLELRLARFEQLISRRPLLLNSVLLRQNPHHVHEWHKRVALHQGRPREIINTYTEAVQTVDPFKATGKPHTLWVAFAKFYEDNGQLDDARVILEKATKVNFKQVDDLASVWCQCGELELRHENYDEALRLLRKATALPARRAEYFDGSEPVQNRVYKSLKVWSMLADLEESLGTFQSTKAVYDRILDLRIATPQIVINYAMFLEEHKYFEESFKAYERGISLFKWPNVSDIWSTYLTKFIARYGGRKLERARDLFEQALDGCPPKYAKTLYLLYAQLEEEWGLARHAMAVYERATRAVEPAQQYDMFNIYIKRAAEIYGVTHTRGIYQKAIEVLSDEHAREMCLRFADMECKLGEIDRARAIYSFCSQICDPRTTGAFWQTWKDFEVRHGNEDTIKEMLRIRRSVQATYNTQVNFMASQMLKVSGSATGTVSDLAPGQSGMDDMKLLEQRAEQLAAEAERDQPLRAQSKILFVRSDASREELAELAQQVNPEEIQLGEDEDEDEMDLEPNEVRLEQQSVPAAVFGSLKED</sequence>
<comment type="function">
    <text evidence="3 4 5 7 8">Involved in pre-mRNA splicing as component of the spliceosome (PubMed:11991638, PubMed:28076346, PubMed:28502770). Involved in transcription-coupled repair (TCR), transcription and pre-mRNA splicing (PubMed:10944529, PubMed:17981804).</text>
</comment>
<comment type="subunit">
    <text evidence="3 4 5 6 7 8">Associates with RNA polymerase II, the TCR-specific proteins CKN1/CSA and ERCC6/CSB, and XPA (PubMed:10944529). Identified in the spliceosome C complex (PubMed:11991638, PubMed:28076346, PubMed:28502770). Component of the XAB2 complex, a multimeric protein complex composed of XAB2, PRPF19, AQR, ZNF830, ISY1, and PPIE (PubMed:17981804). Identified in a pentameric intron-binding (IB) complex composed of AQR, XAB2, ISY1, ZNF830 and PPIE that is incorporated into the spliceosome as a preassembled complex (PubMed:25599396). The IB complex does not contain PRPF19 (PubMed:25599396).</text>
</comment>
<comment type="interaction">
    <interactant intactId="EBI-295232">
        <id>Q9HCS7</id>
    </interactant>
    <interactant intactId="EBI-2512328">
        <id>O60306</id>
        <label>AQR</label>
    </interactant>
    <organismsDiffer>false</organismsDiffer>
    <experiments>6</experiments>
</comment>
<comment type="interaction">
    <interactant intactId="EBI-295232">
        <id>Q9HCS7</id>
    </interactant>
    <interactant intactId="EBI-311446">
        <id>O60231</id>
        <label>DHX16</label>
    </interactant>
    <organismsDiffer>false</organismsDiffer>
    <experiments>2</experiments>
</comment>
<comment type="interaction">
    <interactant intactId="EBI-295232">
        <id>Q9HCS7</id>
    </interactant>
    <interactant intactId="EBI-295260">
        <id>Q13216</id>
        <label>ERCC8</label>
    </interactant>
    <organismsDiffer>false</organismsDiffer>
    <experiments>3</experiments>
</comment>
<comment type="interaction">
    <interactant intactId="EBI-295232">
        <id>Q9HCS7</id>
    </interactant>
    <interactant intactId="EBI-466029">
        <id>P42858</id>
        <label>HTT</label>
    </interactant>
    <organismsDiffer>false</organismsDiffer>
    <experiments>3</experiments>
</comment>
<comment type="interaction">
    <interactant intactId="EBI-295232">
        <id>Q9HCS7</id>
    </interactant>
    <interactant intactId="EBI-713456">
        <id>Q13123</id>
        <label>IK</label>
    </interactant>
    <organismsDiffer>false</organismsDiffer>
    <experiments>2</experiments>
</comment>
<comment type="interaction">
    <interactant intactId="EBI-295232">
        <id>Q9HCS7</id>
    </interactant>
    <interactant intactId="EBI-2557660">
        <id>Q9ULR0</id>
        <label>ISY1</label>
    </interactant>
    <organismsDiffer>false</organismsDiffer>
    <experiments>9</experiments>
</comment>
<comment type="interaction">
    <interactant intactId="EBI-295232">
        <id>Q9HCS7</id>
    </interactant>
    <interactant intactId="EBI-295301">
        <id>P24928</id>
        <label>POLR2A</label>
    </interactant>
    <organismsDiffer>false</organismsDiffer>
    <experiments>2</experiments>
</comment>
<comment type="interaction">
    <interactant intactId="EBI-295232">
        <id>Q9HCS7</id>
    </interactant>
    <interactant intactId="EBI-591818">
        <id>Q9UNP9</id>
        <label>PPIE</label>
    </interactant>
    <organismsDiffer>false</organismsDiffer>
    <experiments>14</experiments>
</comment>
<comment type="interaction">
    <interactant intactId="EBI-295232">
        <id>Q9HCS7</id>
    </interactant>
    <interactant intactId="EBI-749111">
        <id>Q13435</id>
        <label>SF3B2</label>
    </interactant>
    <organismsDiffer>false</organismsDiffer>
    <experiments>2</experiments>
</comment>
<comment type="interaction">
    <interactant intactId="EBI-295232">
        <id>Q9HCS7</id>
    </interactant>
    <interactant intactId="EBI-876439">
        <id>P09661</id>
        <label>SNRPA1</label>
    </interactant>
    <organismsDiffer>false</organismsDiffer>
    <experiments>5</experiments>
</comment>
<comment type="interaction">
    <interactant intactId="EBI-295232">
        <id>Q9HCS7</id>
    </interactant>
    <interactant intactId="EBI-632715">
        <id>Q13573</id>
        <label>SNW1</label>
    </interactant>
    <organismsDiffer>false</organismsDiffer>
    <experiments>4</experiments>
</comment>
<comment type="interaction">
    <interactant intactId="EBI-295232">
        <id>Q9HCS7</id>
    </interactant>
    <interactant intactId="EBI-295222">
        <id>P23025</id>
        <label>XPA</label>
    </interactant>
    <organismsDiffer>false</organismsDiffer>
    <experiments>2</experiments>
</comment>
<comment type="subcellular location">
    <subcellularLocation>
        <location evidence="4 6 7 8">Nucleus</location>
    </subcellularLocation>
    <text evidence="1">Detected in the splicing complex carrying pre-mRNA.</text>
</comment>
<comment type="similarity">
    <text evidence="10">Belongs to the crooked-neck family.</text>
</comment>
<comment type="sequence caution" evidence="10">
    <conflict type="frameshift">
        <sequence resource="EMBL-CDS" id="AAF86951"/>
    </conflict>
</comment>
<comment type="sequence caution" evidence="10">
    <conflict type="erroneous initiation">
        <sequence resource="EMBL-CDS" id="AAH08778"/>
    </conflict>
    <text>Extended N-terminus.</text>
</comment>
<comment type="sequence caution" evidence="10">
    <conflict type="miscellaneous discrepancy">
        <sequence resource="EMBL-CDS" id="BAB84861"/>
    </conflict>
    <text>Alternative splicing. Incomplete sequence.</text>
</comment>
<reference evidence="10" key="1">
    <citation type="journal article" date="2000" name="J. Biol. Chem.">
        <title>XAB2, a novel tetratricopeptide repeat protein, involved in transcription-coupled DNA repair and transcription.</title>
        <authorList>
            <person name="Nakatsu Y."/>
            <person name="Asahina H."/>
            <person name="Citterio E."/>
            <person name="Rademakers S."/>
            <person name="Vermeulen W."/>
            <person name="Kamiuchi S."/>
            <person name="Yeo J.-P."/>
            <person name="Khaw M.-C."/>
            <person name="Saijo M."/>
            <person name="Kodo N."/>
            <person name="Matsuda T."/>
            <person name="Hoeijmakers J.H.J."/>
            <person name="Tanaka K."/>
        </authorList>
    </citation>
    <scope>NUCLEOTIDE SEQUENCE [MRNA]</scope>
    <scope>FUNCTION</scope>
    <scope>SUBUNIT</scope>
</reference>
<reference evidence="10 11" key="2">
    <citation type="submission" date="2000-01" db="EMBL/GenBank/DDBJ databases">
        <title>A novel gene expressed in human adrenal gland.</title>
        <authorList>
            <person name="Li Y."/>
            <person name="Wu T."/>
            <person name="Xu S."/>
            <person name="Ren S."/>
            <person name="Chen Z."/>
            <person name="Han Z."/>
        </authorList>
    </citation>
    <scope>NUCLEOTIDE SEQUENCE [LARGE SCALE MRNA]</scope>
    <source>
        <tissue>Adrenal gland</tissue>
    </source>
</reference>
<reference key="3">
    <citation type="journal article" date="2004" name="Proc. Natl. Acad. Sci. U.S.A.">
        <title>Large-scale cDNA transfection screening for genes related to cancer development and progression.</title>
        <authorList>
            <person name="Wan D."/>
            <person name="Gong Y."/>
            <person name="Qin W."/>
            <person name="Zhang P."/>
            <person name="Li J."/>
            <person name="Wei L."/>
            <person name="Zhou X."/>
            <person name="Li H."/>
            <person name="Qiu X."/>
            <person name="Zhong F."/>
            <person name="He L."/>
            <person name="Yu J."/>
            <person name="Yao G."/>
            <person name="Jiang H."/>
            <person name="Qian L."/>
            <person name="Yu Y."/>
            <person name="Shu H."/>
            <person name="Chen X."/>
            <person name="Xu H."/>
            <person name="Guo M."/>
            <person name="Pan Z."/>
            <person name="Chen Y."/>
            <person name="Ge C."/>
            <person name="Yang S."/>
            <person name="Gu J."/>
        </authorList>
    </citation>
    <scope>NUCLEOTIDE SEQUENCE [LARGE SCALE MRNA]</scope>
</reference>
<reference evidence="10 11" key="4">
    <citation type="submission" date="2002-09" db="EMBL/GenBank/DDBJ databases">
        <authorList>
            <consortium name="NIEHS SNPs program"/>
        </authorList>
    </citation>
    <scope>NUCLEOTIDE SEQUENCE [GENOMIC DNA]</scope>
    <scope>VARIANTS ILE-126; GLN-454 AND THR-702</scope>
</reference>
<reference key="5">
    <citation type="journal article" date="2004" name="Genome Res.">
        <title>The status, quality, and expansion of the NIH full-length cDNA project: the Mammalian Gene Collection (MGC).</title>
        <authorList>
            <consortium name="The MGC Project Team"/>
        </authorList>
    </citation>
    <scope>NUCLEOTIDE SEQUENCE [LARGE SCALE MRNA]</scope>
    <source>
        <tissue>Lung</tissue>
    </source>
</reference>
<reference evidence="10 11" key="6">
    <citation type="submission" date="2002-01" db="EMBL/GenBank/DDBJ databases">
        <title>The nucleotide sequence of a long cDNA clone isolated from human spleen.</title>
        <authorList>
            <person name="Ohara O."/>
            <person name="Nagase T."/>
            <person name="Kikuno R."/>
            <person name="Okumura K."/>
        </authorList>
    </citation>
    <scope>NUCLEOTIDE SEQUENCE [LARGE SCALE MRNA] OF 28-855</scope>
    <source>
        <tissue>Spleen</tissue>
    </source>
</reference>
<reference key="7">
    <citation type="journal article" date="1999" name="DNA Res.">
        <title>Characterization of cDNA clones selected by the GeneMark analysis from size-fractionated cDNA libraries from human brain.</title>
        <authorList>
            <person name="Hirosawa M."/>
            <person name="Nagase T."/>
            <person name="Ishikawa K."/>
            <person name="Kikuno R."/>
            <person name="Nomura N."/>
            <person name="Ohara O."/>
        </authorList>
    </citation>
    <scope>NUCLEOTIDE SEQUENCE [LARGE SCALE MRNA] OF 101-855</scope>
    <source>
        <tissue>Brain</tissue>
    </source>
</reference>
<reference key="8">
    <citation type="journal article" date="2002" name="RNA">
        <title>Purification and characterization of native spliceosomes suitable for three-dimensional structural analysis.</title>
        <authorList>
            <person name="Jurica M.S."/>
            <person name="Licklider L.J."/>
            <person name="Gygi S.P."/>
            <person name="Grigorieff N."/>
            <person name="Moore M.J."/>
        </authorList>
    </citation>
    <scope>IDENTIFICATION BY MASS SPECTROMETRY</scope>
    <scope>IDENTIFICATION IN THE SPLICEOSOMAL C COMPLEX</scope>
    <scope>FUNCTION</scope>
    <scope>SUBCELLULAR LOCATION</scope>
    <scope>SUBUNIT</scope>
</reference>
<reference key="9">
    <citation type="journal article" date="2008" name="J. Biol. Chem.">
        <title>Isolation of XAB2 complex involved in pre-mRNA splicing, transcription, and transcription-coupled repair.</title>
        <authorList>
            <person name="Kuraoka I."/>
            <person name="Ito S."/>
            <person name="Wada T."/>
            <person name="Hayashida M."/>
            <person name="Lee L."/>
            <person name="Saijo M."/>
            <person name="Nakatsu Y."/>
            <person name="Matsumoto M."/>
            <person name="Matsunaga T."/>
            <person name="Handa H."/>
            <person name="Qin J."/>
            <person name="Nakatani Y."/>
            <person name="Tanaka K."/>
        </authorList>
    </citation>
    <scope>FUNCTION</scope>
    <scope>IDENTIFICATION AS PART OF THE XAB2 COMPLEX</scope>
</reference>
<reference key="10">
    <citation type="journal article" date="2008" name="Proc. Natl. Acad. Sci. U.S.A.">
        <title>A quantitative atlas of mitotic phosphorylation.</title>
        <authorList>
            <person name="Dephoure N."/>
            <person name="Zhou C."/>
            <person name="Villen J."/>
            <person name="Beausoleil S.A."/>
            <person name="Bakalarski C.E."/>
            <person name="Elledge S.J."/>
            <person name="Gygi S.P."/>
        </authorList>
    </citation>
    <scope>PHOSPHORYLATION [LARGE SCALE ANALYSIS] AT SER-851</scope>
    <scope>IDENTIFICATION BY MASS SPECTROMETRY [LARGE SCALE ANALYSIS]</scope>
    <source>
        <tissue>Cervix carcinoma</tissue>
    </source>
</reference>
<reference key="11">
    <citation type="journal article" date="2009" name="Science">
        <title>Lysine acetylation targets protein complexes and co-regulates major cellular functions.</title>
        <authorList>
            <person name="Choudhary C."/>
            <person name="Kumar C."/>
            <person name="Gnad F."/>
            <person name="Nielsen M.L."/>
            <person name="Rehman M."/>
            <person name="Walther T.C."/>
            <person name="Olsen J.V."/>
            <person name="Mann M."/>
        </authorList>
    </citation>
    <scope>ACETYLATION [LARGE SCALE ANALYSIS] AT LYS-420</scope>
    <scope>IDENTIFICATION BY MASS SPECTROMETRY [LARGE SCALE ANALYSIS]</scope>
</reference>
<reference key="12">
    <citation type="journal article" date="2011" name="BMC Syst. Biol.">
        <title>Initial characterization of the human central proteome.</title>
        <authorList>
            <person name="Burkard T.R."/>
            <person name="Planyavsky M."/>
            <person name="Kaupe I."/>
            <person name="Breitwieser F.P."/>
            <person name="Buerckstuemmer T."/>
            <person name="Bennett K.L."/>
            <person name="Superti-Furga G."/>
            <person name="Colinge J."/>
        </authorList>
    </citation>
    <scope>IDENTIFICATION BY MASS SPECTROMETRY [LARGE SCALE ANALYSIS]</scope>
</reference>
<reference key="13">
    <citation type="journal article" date="2013" name="J. Proteome Res.">
        <title>Toward a comprehensive characterization of a human cancer cell phosphoproteome.</title>
        <authorList>
            <person name="Zhou H."/>
            <person name="Di Palma S."/>
            <person name="Preisinger C."/>
            <person name="Peng M."/>
            <person name="Polat A.N."/>
            <person name="Heck A.J."/>
            <person name="Mohammed S."/>
        </authorList>
    </citation>
    <scope>PHOSPHORYLATION [LARGE SCALE ANALYSIS] AT SER-851</scope>
    <scope>IDENTIFICATION BY MASS SPECTROMETRY [LARGE SCALE ANALYSIS]</scope>
    <source>
        <tissue>Cervix carcinoma</tissue>
        <tissue>Erythroleukemia</tissue>
    </source>
</reference>
<reference key="14">
    <citation type="journal article" date="2014" name="J. Proteomics">
        <title>An enzyme assisted RP-RPLC approach for in-depth analysis of human liver phosphoproteome.</title>
        <authorList>
            <person name="Bian Y."/>
            <person name="Song C."/>
            <person name="Cheng K."/>
            <person name="Dong M."/>
            <person name="Wang F."/>
            <person name="Huang J."/>
            <person name="Sun D."/>
            <person name="Wang L."/>
            <person name="Ye M."/>
            <person name="Zou H."/>
        </authorList>
    </citation>
    <scope>IDENTIFICATION BY MASS SPECTROMETRY [LARGE SCALE ANALYSIS]</scope>
    <source>
        <tissue>Liver</tissue>
    </source>
</reference>
<reference key="15">
    <citation type="journal article" date="2015" name="Nat. Struct. Mol. Biol.">
        <title>The RNA helicase Aquarius exhibits structural adaptations mediating its recruitment to spliceosomes.</title>
        <authorList>
            <person name="De I."/>
            <person name="Bessonov S."/>
            <person name="Hofele R."/>
            <person name="dos Santos K."/>
            <person name="Will C.L."/>
            <person name="Urlaub H."/>
            <person name="Luhrmann R."/>
            <person name="Pena V."/>
        </authorList>
    </citation>
    <scope>IDENTIFICATION BY MASS SPECTROMETRY</scope>
    <scope>IDENTIFICATION IN THE IB COMPLEX</scope>
    <scope>SUBUNIT</scope>
    <scope>SUBCELLULAR LOCATION</scope>
</reference>
<reference evidence="14" key="16">
    <citation type="journal article" date="2017" name="Cell">
        <title>An Atomic Structure of the Human Spliceosome.</title>
        <authorList>
            <person name="Zhang X."/>
            <person name="Yan C."/>
            <person name="Hang J."/>
            <person name="Finci L.I."/>
            <person name="Lei J."/>
            <person name="Shi Y."/>
        </authorList>
    </citation>
    <scope>STRUCTURE BY ELECTRON MICROSCOPY (3.60 ANGSTROMS)</scope>
    <scope>FUNCTION</scope>
    <scope>SUBUNIT</scope>
    <scope>SUBCELLULAR LOCATION</scope>
</reference>
<reference evidence="13" key="17">
    <citation type="journal article" date="2017" name="Nature">
        <title>Cryo-EM structure of a human spliceosome activated for step 2 of splicing.</title>
        <authorList>
            <person name="Bertram K."/>
            <person name="Agafonov D.E."/>
            <person name="Liu W.T."/>
            <person name="Dybkov O."/>
            <person name="Will C.L."/>
            <person name="Hartmuth K."/>
            <person name="Urlaub H."/>
            <person name="Kastner B."/>
            <person name="Stark H."/>
            <person name="Luhrmann R."/>
        </authorList>
    </citation>
    <scope>STRUCTURE BY ELECTRON MICROSCOPY (5.90 ANGSTROMS)</scope>
    <scope>FUNCTION</scope>
    <scope>SUBUNIT</scope>
    <scope>SUBCELLULAR LOCATION</scope>
    <scope>IDENTIFICATION BY MASS SPECTROMETRY</scope>
</reference>
<gene>
    <name type="primary">XAB2</name>
    <name type="synonym">HCNP</name>
    <name type="synonym">KIAA1177</name>
    <name type="synonym">SYF1</name>
    <name type="ORF">PP3898</name>
</gene>
<evidence type="ECO:0000250" key="1">
    <source>
        <dbReference type="UniProtKB" id="Q99PK0"/>
    </source>
</evidence>
<evidence type="ECO:0000256" key="2">
    <source>
        <dbReference type="SAM" id="MobiDB-lite"/>
    </source>
</evidence>
<evidence type="ECO:0000269" key="3">
    <source>
    </source>
</evidence>
<evidence type="ECO:0000269" key="4">
    <source>
    </source>
</evidence>
<evidence type="ECO:0000269" key="5">
    <source>
    </source>
</evidence>
<evidence type="ECO:0000269" key="6">
    <source>
    </source>
</evidence>
<evidence type="ECO:0000269" key="7">
    <source>
    </source>
</evidence>
<evidence type="ECO:0000269" key="8">
    <source>
    </source>
</evidence>
<evidence type="ECO:0000269" key="9">
    <source ref="4"/>
</evidence>
<evidence type="ECO:0000305" key="10"/>
<evidence type="ECO:0000312" key="11">
    <source>
        <dbReference type="EMBL" id="AAF86951.1"/>
    </source>
</evidence>
<evidence type="ECO:0000312" key="12">
    <source>
        <dbReference type="EMBL" id="BAB15807.1"/>
    </source>
</evidence>
<evidence type="ECO:0007744" key="13">
    <source>
        <dbReference type="PDB" id="5MQF"/>
    </source>
</evidence>
<evidence type="ECO:0007744" key="14">
    <source>
        <dbReference type="PDB" id="5XJC"/>
    </source>
</evidence>
<evidence type="ECO:0007744" key="15">
    <source>
    </source>
</evidence>
<evidence type="ECO:0007744" key="16">
    <source>
    </source>
</evidence>
<evidence type="ECO:0007744" key="17">
    <source>
    </source>
</evidence>
<evidence type="ECO:0007829" key="18">
    <source>
        <dbReference type="PDB" id="6ID1"/>
    </source>
</evidence>
<dbReference type="EMBL" id="AB026111">
    <property type="protein sequence ID" value="BAB15807.1"/>
    <property type="molecule type" value="mRNA"/>
</dbReference>
<dbReference type="EMBL" id="AF226051">
    <property type="protein sequence ID" value="AAF86951.1"/>
    <property type="status" value="ALT_FRAME"/>
    <property type="molecule type" value="mRNA"/>
</dbReference>
<dbReference type="EMBL" id="AF258567">
    <property type="protein sequence ID" value="AAG23770.1"/>
    <property type="molecule type" value="mRNA"/>
</dbReference>
<dbReference type="EMBL" id="AF547265">
    <property type="protein sequence ID" value="AAN17847.1"/>
    <property type="molecule type" value="Genomic_DNA"/>
</dbReference>
<dbReference type="EMBL" id="BC007208">
    <property type="protein sequence ID" value="AAH07208.1"/>
    <property type="molecule type" value="mRNA"/>
</dbReference>
<dbReference type="EMBL" id="BC008778">
    <property type="protein sequence ID" value="AAH08778.1"/>
    <property type="status" value="ALT_INIT"/>
    <property type="molecule type" value="mRNA"/>
</dbReference>
<dbReference type="EMBL" id="AK074035">
    <property type="protein sequence ID" value="BAB84861.1"/>
    <property type="status" value="ALT_SEQ"/>
    <property type="molecule type" value="mRNA"/>
</dbReference>
<dbReference type="EMBL" id="AB033003">
    <property type="protein sequence ID" value="BAA86491.1"/>
    <property type="molecule type" value="mRNA"/>
</dbReference>
<dbReference type="CCDS" id="CCDS32892.1"/>
<dbReference type="RefSeq" id="NP_064581.2">
    <property type="nucleotide sequence ID" value="NM_020196.3"/>
</dbReference>
<dbReference type="PDB" id="5MQF">
    <property type="method" value="EM"/>
    <property type="resolution" value="5.90 A"/>
    <property type="chains" value="M=1-855"/>
</dbReference>
<dbReference type="PDB" id="5XJC">
    <property type="method" value="EM"/>
    <property type="resolution" value="3.60 A"/>
    <property type="chains" value="I=1-855"/>
</dbReference>
<dbReference type="PDB" id="5YZG">
    <property type="method" value="EM"/>
    <property type="resolution" value="4.10 A"/>
    <property type="chains" value="I=1-855"/>
</dbReference>
<dbReference type="PDB" id="5Z56">
    <property type="method" value="EM"/>
    <property type="resolution" value="5.10 A"/>
    <property type="chains" value="I=1-855"/>
</dbReference>
<dbReference type="PDB" id="5Z57">
    <property type="method" value="EM"/>
    <property type="resolution" value="6.50 A"/>
    <property type="chains" value="I=1-855"/>
</dbReference>
<dbReference type="PDB" id="6FF7">
    <property type="method" value="EM"/>
    <property type="resolution" value="4.50 A"/>
    <property type="chains" value="M=1-855"/>
</dbReference>
<dbReference type="PDB" id="6ICZ">
    <property type="method" value="EM"/>
    <property type="resolution" value="3.00 A"/>
    <property type="chains" value="I=1-855"/>
</dbReference>
<dbReference type="PDB" id="6ID0">
    <property type="method" value="EM"/>
    <property type="resolution" value="2.90 A"/>
    <property type="chains" value="I=1-855"/>
</dbReference>
<dbReference type="PDB" id="6ID1">
    <property type="method" value="EM"/>
    <property type="resolution" value="2.86 A"/>
    <property type="chains" value="I=1-855"/>
</dbReference>
<dbReference type="PDB" id="6QDV">
    <property type="method" value="EM"/>
    <property type="resolution" value="3.30 A"/>
    <property type="chains" value="T=1-855"/>
</dbReference>
<dbReference type="PDB" id="7A5P">
    <property type="method" value="EM"/>
    <property type="resolution" value="5.00 A"/>
    <property type="chains" value="M=1-855"/>
</dbReference>
<dbReference type="PDB" id="7ABI">
    <property type="method" value="EM"/>
    <property type="resolution" value="8.00 A"/>
    <property type="chains" value="M=1-855"/>
</dbReference>
<dbReference type="PDB" id="7W59">
    <property type="method" value="EM"/>
    <property type="resolution" value="3.60 A"/>
    <property type="chains" value="I=1-855"/>
</dbReference>
<dbReference type="PDB" id="7W5A">
    <property type="method" value="EM"/>
    <property type="resolution" value="3.60 A"/>
    <property type="chains" value="I=1-855"/>
</dbReference>
<dbReference type="PDB" id="7W5B">
    <property type="method" value="EM"/>
    <property type="resolution" value="4.30 A"/>
    <property type="chains" value="I=1-855"/>
</dbReference>
<dbReference type="PDB" id="8C6J">
    <property type="method" value="EM"/>
    <property type="resolution" value="2.80 A"/>
    <property type="chains" value="T=1-855"/>
</dbReference>
<dbReference type="PDB" id="8CH6">
    <property type="method" value="EM"/>
    <property type="resolution" value="5.90 A"/>
    <property type="chains" value="z=1-855"/>
</dbReference>
<dbReference type="PDB" id="8I0P">
    <property type="method" value="EM"/>
    <property type="resolution" value="3.40 A"/>
    <property type="chains" value="I=1-855"/>
</dbReference>
<dbReference type="PDB" id="8I0R">
    <property type="method" value="EM"/>
    <property type="resolution" value="3.00 A"/>
    <property type="chains" value="I=1-855"/>
</dbReference>
<dbReference type="PDB" id="8I0S">
    <property type="method" value="EM"/>
    <property type="resolution" value="4.20 A"/>
    <property type="chains" value="I=1-855"/>
</dbReference>
<dbReference type="PDB" id="8I0T">
    <property type="method" value="EM"/>
    <property type="resolution" value="3.00 A"/>
    <property type="chains" value="I=1-855"/>
</dbReference>
<dbReference type="PDB" id="8I0U">
    <property type="method" value="EM"/>
    <property type="resolution" value="3.30 A"/>
    <property type="chains" value="I=1-855"/>
</dbReference>
<dbReference type="PDB" id="8I0V">
    <property type="method" value="EM"/>
    <property type="resolution" value="3.00 A"/>
    <property type="chains" value="I=1-855"/>
</dbReference>
<dbReference type="PDB" id="8I0W">
    <property type="method" value="EM"/>
    <property type="resolution" value="3.40 A"/>
    <property type="chains" value="I=1-855"/>
</dbReference>
<dbReference type="PDB" id="8RO2">
    <property type="method" value="EM"/>
    <property type="resolution" value="3.50 A"/>
    <property type="chains" value="I=1-855"/>
</dbReference>
<dbReference type="PDB" id="9FMD">
    <property type="method" value="EM"/>
    <property type="resolution" value="3.30 A"/>
    <property type="chains" value="I=1-855"/>
</dbReference>
<dbReference type="PDBsum" id="5MQF"/>
<dbReference type="PDBsum" id="5XJC"/>
<dbReference type="PDBsum" id="5YZG"/>
<dbReference type="PDBsum" id="5Z56"/>
<dbReference type="PDBsum" id="5Z57"/>
<dbReference type="PDBsum" id="6FF7"/>
<dbReference type="PDBsum" id="6ICZ"/>
<dbReference type="PDBsum" id="6ID0"/>
<dbReference type="PDBsum" id="6ID1"/>
<dbReference type="PDBsum" id="6QDV"/>
<dbReference type="PDBsum" id="7A5P"/>
<dbReference type="PDBsum" id="7ABI"/>
<dbReference type="PDBsum" id="7W59"/>
<dbReference type="PDBsum" id="7W5A"/>
<dbReference type="PDBsum" id="7W5B"/>
<dbReference type="PDBsum" id="8C6J"/>
<dbReference type="PDBsum" id="8CH6"/>
<dbReference type="PDBsum" id="8I0P"/>
<dbReference type="PDBsum" id="8I0R"/>
<dbReference type="PDBsum" id="8I0S"/>
<dbReference type="PDBsum" id="8I0T"/>
<dbReference type="PDBsum" id="8I0U"/>
<dbReference type="PDBsum" id="8I0V"/>
<dbReference type="PDBsum" id="8I0W"/>
<dbReference type="PDBsum" id="8RO2"/>
<dbReference type="PDBsum" id="9FMD"/>
<dbReference type="EMDB" id="EMD-11697"/>
<dbReference type="EMDB" id="EMD-16452"/>
<dbReference type="EMDB" id="EMD-16658"/>
<dbReference type="EMDB" id="EMD-19399"/>
<dbReference type="EMDB" id="EMD-32317"/>
<dbReference type="EMDB" id="EMD-32319"/>
<dbReference type="EMDB" id="EMD-32321"/>
<dbReference type="EMDB" id="EMD-35105"/>
<dbReference type="EMDB" id="EMD-35107"/>
<dbReference type="EMDB" id="EMD-35108"/>
<dbReference type="EMDB" id="EMD-35109"/>
<dbReference type="EMDB" id="EMD-35110"/>
<dbReference type="EMDB" id="EMD-35111"/>
<dbReference type="EMDB" id="EMD-35113"/>
<dbReference type="EMDB" id="EMD-3545"/>
<dbReference type="EMDB" id="EMD-4525"/>
<dbReference type="EMDB" id="EMD-6721"/>
<dbReference type="EMDB" id="EMD-6864"/>
<dbReference type="EMDB" id="EMD-6889"/>
<dbReference type="EMDB" id="EMD-6890"/>
<dbReference type="EMDB" id="EMD-9645"/>
<dbReference type="EMDB" id="EMD-9646"/>
<dbReference type="EMDB" id="EMD-9647"/>
<dbReference type="SMR" id="Q9HCS7"/>
<dbReference type="BioGRID" id="121273">
    <property type="interactions" value="211"/>
</dbReference>
<dbReference type="ComplexPortal" id="CPX-8065">
    <property type="entry name" value="Intron-binding complex"/>
</dbReference>
<dbReference type="CORUM" id="Q9HCS7"/>
<dbReference type="DIP" id="DIP-31646N"/>
<dbReference type="FunCoup" id="Q9HCS7">
    <property type="interactions" value="3275"/>
</dbReference>
<dbReference type="IntAct" id="Q9HCS7">
    <property type="interactions" value="113"/>
</dbReference>
<dbReference type="MINT" id="Q9HCS7"/>
<dbReference type="STRING" id="9606.ENSP00000351137"/>
<dbReference type="GlyGen" id="Q9HCS7">
    <property type="glycosylation" value="1 site, 1 O-linked glycan (1 site)"/>
</dbReference>
<dbReference type="iPTMnet" id="Q9HCS7"/>
<dbReference type="PhosphoSitePlus" id="Q9HCS7"/>
<dbReference type="SwissPalm" id="Q9HCS7"/>
<dbReference type="BioMuta" id="XAB2"/>
<dbReference type="DMDM" id="25091548"/>
<dbReference type="jPOST" id="Q9HCS7"/>
<dbReference type="MassIVE" id="Q9HCS7"/>
<dbReference type="PaxDb" id="9606-ENSP00000351137"/>
<dbReference type="PeptideAtlas" id="Q9HCS7"/>
<dbReference type="ProteomicsDB" id="81796"/>
<dbReference type="Pumba" id="Q9HCS7"/>
<dbReference type="Antibodypedia" id="12104">
    <property type="antibodies" value="302 antibodies from 34 providers"/>
</dbReference>
<dbReference type="DNASU" id="56949"/>
<dbReference type="Ensembl" id="ENST00000358368.5">
    <property type="protein sequence ID" value="ENSP00000351137.3"/>
    <property type="gene ID" value="ENSG00000076924.12"/>
</dbReference>
<dbReference type="GeneID" id="56949"/>
<dbReference type="KEGG" id="hsa:56949"/>
<dbReference type="MANE-Select" id="ENST00000358368.5">
    <property type="protein sequence ID" value="ENSP00000351137.3"/>
    <property type="RefSeq nucleotide sequence ID" value="NM_020196.3"/>
    <property type="RefSeq protein sequence ID" value="NP_064581.2"/>
</dbReference>
<dbReference type="UCSC" id="uc002mgx.4">
    <property type="organism name" value="human"/>
</dbReference>
<dbReference type="AGR" id="HGNC:14089"/>
<dbReference type="CTD" id="56949"/>
<dbReference type="DisGeNET" id="56949"/>
<dbReference type="GeneCards" id="XAB2"/>
<dbReference type="HGNC" id="HGNC:14089">
    <property type="gene designation" value="XAB2"/>
</dbReference>
<dbReference type="HPA" id="ENSG00000076924">
    <property type="expression patterns" value="Low tissue specificity"/>
</dbReference>
<dbReference type="MIM" id="610850">
    <property type="type" value="gene"/>
</dbReference>
<dbReference type="neXtProt" id="NX_Q9HCS7"/>
<dbReference type="OpenTargets" id="ENSG00000076924"/>
<dbReference type="PharmGKB" id="PA134905925"/>
<dbReference type="VEuPathDB" id="HostDB:ENSG00000076924"/>
<dbReference type="eggNOG" id="KOG2047">
    <property type="taxonomic scope" value="Eukaryota"/>
</dbReference>
<dbReference type="GeneTree" id="ENSGT00550000075140"/>
<dbReference type="HOGENOM" id="CLU_007736_2_1_1"/>
<dbReference type="InParanoid" id="Q9HCS7"/>
<dbReference type="OMA" id="IWYNYLR"/>
<dbReference type="OrthoDB" id="10067343at2759"/>
<dbReference type="PAN-GO" id="Q9HCS7">
    <property type="GO annotations" value="5 GO annotations based on evolutionary models"/>
</dbReference>
<dbReference type="PhylomeDB" id="Q9HCS7"/>
<dbReference type="TreeFam" id="TF300866"/>
<dbReference type="PathwayCommons" id="Q9HCS7"/>
<dbReference type="Reactome" id="R-HSA-6781823">
    <property type="pathway name" value="Formation of TC-NER Pre-Incision Complex"/>
</dbReference>
<dbReference type="Reactome" id="R-HSA-6781827">
    <property type="pathway name" value="Transcription-Coupled Nucleotide Excision Repair (TC-NER)"/>
</dbReference>
<dbReference type="Reactome" id="R-HSA-6782135">
    <property type="pathway name" value="Dual incision in TC-NER"/>
</dbReference>
<dbReference type="Reactome" id="R-HSA-6782210">
    <property type="pathway name" value="Gap-filling DNA repair synthesis and ligation in TC-NER"/>
</dbReference>
<dbReference type="Reactome" id="R-HSA-72163">
    <property type="pathway name" value="mRNA Splicing - Major Pathway"/>
</dbReference>
<dbReference type="SignaLink" id="Q9HCS7"/>
<dbReference type="SIGNOR" id="Q9HCS7"/>
<dbReference type="BioGRID-ORCS" id="56949">
    <property type="hits" value="831 hits in 1151 CRISPR screens"/>
</dbReference>
<dbReference type="CD-CODE" id="232F8A39">
    <property type="entry name" value="P-body"/>
</dbReference>
<dbReference type="ChiTaRS" id="XAB2">
    <property type="organism name" value="human"/>
</dbReference>
<dbReference type="GeneWiki" id="XAB2"/>
<dbReference type="GenomeRNAi" id="56949"/>
<dbReference type="Pharos" id="Q9HCS7">
    <property type="development level" value="Tbio"/>
</dbReference>
<dbReference type="PRO" id="PR:Q9HCS7"/>
<dbReference type="Proteomes" id="UP000005640">
    <property type="component" value="Chromosome 19"/>
</dbReference>
<dbReference type="RNAct" id="Q9HCS7">
    <property type="molecule type" value="protein"/>
</dbReference>
<dbReference type="Bgee" id="ENSG00000076924">
    <property type="expression patterns" value="Expressed in left ovary and 117 other cell types or tissues"/>
</dbReference>
<dbReference type="GO" id="GO:0071013">
    <property type="term" value="C:catalytic step 2 spliceosome"/>
    <property type="evidence" value="ECO:0000314"/>
    <property type="project" value="UniProtKB"/>
</dbReference>
<dbReference type="GO" id="GO:0043231">
    <property type="term" value="C:intracellular membrane-bounded organelle"/>
    <property type="evidence" value="ECO:0000314"/>
    <property type="project" value="HPA"/>
</dbReference>
<dbReference type="GO" id="GO:0016020">
    <property type="term" value="C:membrane"/>
    <property type="evidence" value="ECO:0007005"/>
    <property type="project" value="UniProtKB"/>
</dbReference>
<dbReference type="GO" id="GO:0005654">
    <property type="term" value="C:nucleoplasm"/>
    <property type="evidence" value="ECO:0000314"/>
    <property type="project" value="HPA"/>
</dbReference>
<dbReference type="GO" id="GO:0005634">
    <property type="term" value="C:nucleus"/>
    <property type="evidence" value="ECO:0000314"/>
    <property type="project" value="UniProtKB"/>
</dbReference>
<dbReference type="GO" id="GO:0071014">
    <property type="term" value="C:post-mRNA release spliceosomal complex"/>
    <property type="evidence" value="ECO:0000318"/>
    <property type="project" value="GO_Central"/>
</dbReference>
<dbReference type="GO" id="GO:0000974">
    <property type="term" value="C:Prp19 complex"/>
    <property type="evidence" value="ECO:0000318"/>
    <property type="project" value="GO_Central"/>
</dbReference>
<dbReference type="GO" id="GO:0071007">
    <property type="term" value="C:U2-type catalytic step 2 spliceosome"/>
    <property type="evidence" value="ECO:0000314"/>
    <property type="project" value="UniProtKB"/>
</dbReference>
<dbReference type="GO" id="GO:0001824">
    <property type="term" value="P:blastocyst development"/>
    <property type="evidence" value="ECO:0007669"/>
    <property type="project" value="Ensembl"/>
</dbReference>
<dbReference type="GO" id="GO:0021987">
    <property type="term" value="P:cerebral cortex development"/>
    <property type="evidence" value="ECO:0007669"/>
    <property type="project" value="Ensembl"/>
</dbReference>
<dbReference type="GO" id="GO:0006351">
    <property type="term" value="P:DNA-templated transcription"/>
    <property type="evidence" value="ECO:0000314"/>
    <property type="project" value="UniProtKB"/>
</dbReference>
<dbReference type="GO" id="GO:0000349">
    <property type="term" value="P:generation of catalytic spliceosome for first transesterification step"/>
    <property type="evidence" value="ECO:0000318"/>
    <property type="project" value="GO_Central"/>
</dbReference>
<dbReference type="GO" id="GO:0000398">
    <property type="term" value="P:mRNA splicing, via spliceosome"/>
    <property type="evidence" value="ECO:0000314"/>
    <property type="project" value="UniProtKB"/>
</dbReference>
<dbReference type="GO" id="GO:0006283">
    <property type="term" value="P:transcription-coupled nucleotide-excision repair"/>
    <property type="evidence" value="ECO:0000314"/>
    <property type="project" value="UniProtKB"/>
</dbReference>
<dbReference type="FunFam" id="1.25.40.10:FF:000023">
    <property type="entry name" value="Pre-mRNA-splicing factor SYF1"/>
    <property type="match status" value="1"/>
</dbReference>
<dbReference type="FunFam" id="1.25.40.10:FF:000137">
    <property type="entry name" value="Pre-mRNA-splicing factor syf1"/>
    <property type="match status" value="1"/>
</dbReference>
<dbReference type="FunFam" id="1.25.40.10:FF:000411">
    <property type="entry name" value="pre-mRNA-splicing factor SYF1"/>
    <property type="match status" value="1"/>
</dbReference>
<dbReference type="FunFam" id="1.25.40.10:FF:000519">
    <property type="entry name" value="pre-mRNA-splicing factor SYF1"/>
    <property type="match status" value="1"/>
</dbReference>
<dbReference type="FunFam" id="1.25.40.10:FF:001071">
    <property type="entry name" value="pre-mRNA-splicing factor SYF1-like"/>
    <property type="match status" value="1"/>
</dbReference>
<dbReference type="Gene3D" id="1.25.40.10">
    <property type="entry name" value="Tetratricopeptide repeat domain"/>
    <property type="match status" value="4"/>
</dbReference>
<dbReference type="InterPro" id="IPR003107">
    <property type="entry name" value="HAT"/>
</dbReference>
<dbReference type="InterPro" id="IPR055433">
    <property type="entry name" value="HAT_Syf1-like_N"/>
</dbReference>
<dbReference type="InterPro" id="IPR056350">
    <property type="entry name" value="HAT_Syf1_central"/>
</dbReference>
<dbReference type="InterPro" id="IPR055430">
    <property type="entry name" value="HAT_Syf1_CNRKL1_C"/>
</dbReference>
<dbReference type="InterPro" id="IPR045075">
    <property type="entry name" value="Syf1-like"/>
</dbReference>
<dbReference type="InterPro" id="IPR011990">
    <property type="entry name" value="TPR-like_helical_dom_sf"/>
</dbReference>
<dbReference type="InterPro" id="IPR019734">
    <property type="entry name" value="TPR_rpt"/>
</dbReference>
<dbReference type="PANTHER" id="PTHR11246">
    <property type="entry name" value="PRE-MRNA SPLICING FACTOR"/>
    <property type="match status" value="1"/>
</dbReference>
<dbReference type="PANTHER" id="PTHR11246:SF5">
    <property type="entry name" value="PRE-MRNA-SPLICING FACTOR SYF1"/>
    <property type="match status" value="1"/>
</dbReference>
<dbReference type="Pfam" id="PF23231">
    <property type="entry name" value="HAT_Syf1_CNRKL1_C"/>
    <property type="match status" value="1"/>
</dbReference>
<dbReference type="Pfam" id="PF23233">
    <property type="entry name" value="HAT_Syf1_CNRKL1_N"/>
    <property type="match status" value="1"/>
</dbReference>
<dbReference type="Pfam" id="PF23220">
    <property type="entry name" value="HAT_Syf1_M"/>
    <property type="match status" value="1"/>
</dbReference>
<dbReference type="SMART" id="SM00386">
    <property type="entry name" value="HAT"/>
    <property type="match status" value="11"/>
</dbReference>
<dbReference type="SMART" id="SM00028">
    <property type="entry name" value="TPR"/>
    <property type="match status" value="3"/>
</dbReference>
<dbReference type="SUPFAM" id="SSF48452">
    <property type="entry name" value="TPR-like"/>
    <property type="match status" value="4"/>
</dbReference>
<name>SYF1_HUMAN</name>
<accession>Q9HCS7</accession>
<accession>Q8TET6</accession>
<accession>Q96HB0</accession>
<accession>Q96IW0</accession>
<accession>Q9NRG6</accession>
<accession>Q9ULP3</accession>
<protein>
    <recommendedName>
        <fullName>Pre-mRNA-splicing factor SYF1</fullName>
    </recommendedName>
    <alternativeName>
        <fullName>Protein HCNP</fullName>
    </alternativeName>
    <alternativeName>
        <fullName>XPA-binding protein 2</fullName>
    </alternativeName>
</protein>
<organism evidence="12">
    <name type="scientific">Homo sapiens</name>
    <name type="common">Human</name>
    <dbReference type="NCBI Taxonomy" id="9606"/>
    <lineage>
        <taxon>Eukaryota</taxon>
        <taxon>Metazoa</taxon>
        <taxon>Chordata</taxon>
        <taxon>Craniata</taxon>
        <taxon>Vertebrata</taxon>
        <taxon>Euteleostomi</taxon>
        <taxon>Mammalia</taxon>
        <taxon>Eutheria</taxon>
        <taxon>Euarchontoglires</taxon>
        <taxon>Primates</taxon>
        <taxon>Haplorrhini</taxon>
        <taxon>Catarrhini</taxon>
        <taxon>Hominidae</taxon>
        <taxon>Homo</taxon>
    </lineage>
</organism>
<proteinExistence type="evidence at protein level"/>